<gene>
    <name type="primary">MT-ND3</name>
    <name type="synonym">MTND3</name>
    <name type="synonym">NADH3</name>
    <name type="synonym">ND3</name>
</gene>
<proteinExistence type="inferred from homology"/>
<sequence length="116" mass="12975">MNLILAGLLIMSILSMILAMIAFWLPNMTPDTEKLSPYECGFDPLGSARLPFSLRFFLVAILFLLFDLEIALLLPLPWADQLTNPTLALTWTTSIIALLTLGLIHEWTQGGLEWAE</sequence>
<comment type="function">
    <text evidence="1">Core subunit of the mitochondrial membrane respiratory chain NADH dehydrogenase (Complex I) that is believed to belong to the minimal assembly required for catalysis. Complex I functions in the transfer of electrons from NADH to the respiratory chain. The immediate electron acceptor for the enzyme is believed to be ubiquinone (By similarity).</text>
</comment>
<comment type="catalytic activity">
    <reaction>
        <text>a ubiquinone + NADH + 5 H(+)(in) = a ubiquinol + NAD(+) + 4 H(+)(out)</text>
        <dbReference type="Rhea" id="RHEA:29091"/>
        <dbReference type="Rhea" id="RHEA-COMP:9565"/>
        <dbReference type="Rhea" id="RHEA-COMP:9566"/>
        <dbReference type="ChEBI" id="CHEBI:15378"/>
        <dbReference type="ChEBI" id="CHEBI:16389"/>
        <dbReference type="ChEBI" id="CHEBI:17976"/>
        <dbReference type="ChEBI" id="CHEBI:57540"/>
        <dbReference type="ChEBI" id="CHEBI:57945"/>
        <dbReference type="EC" id="7.1.1.2"/>
    </reaction>
</comment>
<comment type="subcellular location">
    <subcellularLocation>
        <location evidence="1">Mitochondrion membrane</location>
        <topology evidence="1">Multi-pass membrane protein</topology>
    </subcellularLocation>
</comment>
<comment type="similarity">
    <text evidence="3">Belongs to the complex I subunit 3 family.</text>
</comment>
<evidence type="ECO:0000250" key="1"/>
<evidence type="ECO:0000255" key="2"/>
<evidence type="ECO:0000305" key="3"/>
<feature type="chain" id="PRO_0000117755" description="NADH-ubiquinone oxidoreductase chain 3">
    <location>
        <begin position="1"/>
        <end position="116"/>
    </location>
</feature>
<feature type="transmembrane region" description="Helical" evidence="2">
    <location>
        <begin position="3"/>
        <end position="23"/>
    </location>
</feature>
<feature type="transmembrane region" description="Helical" evidence="2">
    <location>
        <begin position="56"/>
        <end position="76"/>
    </location>
</feature>
<feature type="transmembrane region" description="Helical" evidence="2">
    <location>
        <begin position="85"/>
        <end position="105"/>
    </location>
</feature>
<geneLocation type="mitochondrion"/>
<dbReference type="EC" id="7.1.1.2"/>
<dbReference type="EMBL" id="U82228">
    <property type="protein sequence ID" value="AAC60325.1"/>
    <property type="molecule type" value="Genomic_DNA"/>
</dbReference>
<dbReference type="PIR" id="H58892">
    <property type="entry name" value="H58892"/>
</dbReference>
<dbReference type="RefSeq" id="NP_008336.1">
    <property type="nucleotide sequence ID" value="NC_001804.1"/>
</dbReference>
<dbReference type="SMR" id="O03171"/>
<dbReference type="FunCoup" id="O03171">
    <property type="interactions" value="184"/>
</dbReference>
<dbReference type="STRING" id="7897.ENSLACP00000021812"/>
<dbReference type="Ensembl" id="ENSLACT00000024864.1">
    <property type="protein sequence ID" value="ENSLACP00000021812.1"/>
    <property type="gene ID" value="ENSLACG00000022080.1"/>
</dbReference>
<dbReference type="GeneID" id="808090"/>
<dbReference type="KEGG" id="lcm:808090"/>
<dbReference type="CTD" id="4537"/>
<dbReference type="eggNOG" id="KOG4662">
    <property type="taxonomic scope" value="Eukaryota"/>
</dbReference>
<dbReference type="GeneTree" id="ENSGT00390000011605"/>
<dbReference type="HOGENOM" id="CLU_119549_3_1_1"/>
<dbReference type="InParanoid" id="O03171"/>
<dbReference type="OMA" id="GPRRYNR"/>
<dbReference type="OrthoDB" id="154075at2759"/>
<dbReference type="TreeFam" id="TF343336"/>
<dbReference type="Proteomes" id="UP000008672">
    <property type="component" value="Mitochondrion"/>
</dbReference>
<dbReference type="Bgee" id="ENSLACG00000022080">
    <property type="expression patterns" value="Expressed in pelvic fin and 6 other cell types or tissues"/>
</dbReference>
<dbReference type="GO" id="GO:0031966">
    <property type="term" value="C:mitochondrial membrane"/>
    <property type="evidence" value="ECO:0007669"/>
    <property type="project" value="UniProtKB-SubCell"/>
</dbReference>
<dbReference type="GO" id="GO:0030964">
    <property type="term" value="C:NADH dehydrogenase complex"/>
    <property type="evidence" value="ECO:0007669"/>
    <property type="project" value="TreeGrafter"/>
</dbReference>
<dbReference type="GO" id="GO:0008137">
    <property type="term" value="F:NADH dehydrogenase (ubiquinone) activity"/>
    <property type="evidence" value="ECO:0007669"/>
    <property type="project" value="UniProtKB-EC"/>
</dbReference>
<dbReference type="FunFam" id="1.20.58.1610:FF:000004">
    <property type="entry name" value="NADH-quinone oxidoreductase subunit A"/>
    <property type="match status" value="1"/>
</dbReference>
<dbReference type="Gene3D" id="1.20.58.1610">
    <property type="entry name" value="NADH:ubiquinone/plastoquinone oxidoreductase, chain 3"/>
    <property type="match status" value="1"/>
</dbReference>
<dbReference type="InterPro" id="IPR000440">
    <property type="entry name" value="NADH_UbQ/plastoQ_OxRdtase_su3"/>
</dbReference>
<dbReference type="InterPro" id="IPR038430">
    <property type="entry name" value="NDAH_ubi_oxred_su3_sf"/>
</dbReference>
<dbReference type="PANTHER" id="PTHR11058">
    <property type="entry name" value="NADH-UBIQUINONE OXIDOREDUCTASE CHAIN 3"/>
    <property type="match status" value="1"/>
</dbReference>
<dbReference type="PANTHER" id="PTHR11058:SF9">
    <property type="entry name" value="NADH-UBIQUINONE OXIDOREDUCTASE CHAIN 3"/>
    <property type="match status" value="1"/>
</dbReference>
<dbReference type="Pfam" id="PF00507">
    <property type="entry name" value="Oxidored_q4"/>
    <property type="match status" value="1"/>
</dbReference>
<protein>
    <recommendedName>
        <fullName>NADH-ubiquinone oxidoreductase chain 3</fullName>
        <ecNumber>7.1.1.2</ecNumber>
    </recommendedName>
    <alternativeName>
        <fullName>NADH dehydrogenase subunit 3</fullName>
    </alternativeName>
</protein>
<organism>
    <name type="scientific">Latimeria chalumnae</name>
    <name type="common">Coelacanth</name>
    <dbReference type="NCBI Taxonomy" id="7897"/>
    <lineage>
        <taxon>Eukaryota</taxon>
        <taxon>Metazoa</taxon>
        <taxon>Chordata</taxon>
        <taxon>Craniata</taxon>
        <taxon>Vertebrata</taxon>
        <taxon>Euteleostomi</taxon>
        <taxon>Coelacanthiformes</taxon>
        <taxon>Coelacanthidae</taxon>
        <taxon>Latimeria</taxon>
    </lineage>
</organism>
<name>NU3M_LATCH</name>
<keyword id="KW-0249">Electron transport</keyword>
<keyword id="KW-0472">Membrane</keyword>
<keyword id="KW-0496">Mitochondrion</keyword>
<keyword id="KW-0520">NAD</keyword>
<keyword id="KW-1185">Reference proteome</keyword>
<keyword id="KW-0679">Respiratory chain</keyword>
<keyword id="KW-1278">Translocase</keyword>
<keyword id="KW-0812">Transmembrane</keyword>
<keyword id="KW-1133">Transmembrane helix</keyword>
<keyword id="KW-0813">Transport</keyword>
<keyword id="KW-0830">Ubiquinone</keyword>
<accession>O03171</accession>
<reference key="1">
    <citation type="journal article" date="1997" name="Genetics">
        <title>The complete DNA sequence of the mitochondrial genome of a 'living fossil,' the coelacanth (Latimeria chalumnae).</title>
        <authorList>
            <person name="Zardoya R."/>
            <person name="Meyer A."/>
        </authorList>
    </citation>
    <scope>NUCLEOTIDE SEQUENCE [LARGE SCALE GENOMIC DNA]</scope>
</reference>